<organism>
    <name type="scientific">Neisseria gonorrhoeae (strain ATCC 700825 / FA 1090)</name>
    <dbReference type="NCBI Taxonomy" id="242231"/>
    <lineage>
        <taxon>Bacteria</taxon>
        <taxon>Pseudomonadati</taxon>
        <taxon>Pseudomonadota</taxon>
        <taxon>Betaproteobacteria</taxon>
        <taxon>Neisseriales</taxon>
        <taxon>Neisseriaceae</taxon>
        <taxon>Neisseria</taxon>
    </lineage>
</organism>
<dbReference type="EC" id="3.5.4.16"/>
<dbReference type="EMBL" id="AE004969">
    <property type="protein sequence ID" value="AAW89131.1"/>
    <property type="molecule type" value="Genomic_DNA"/>
</dbReference>
<dbReference type="RefSeq" id="YP_207543.1">
    <property type="nucleotide sequence ID" value="NC_002946.2"/>
</dbReference>
<dbReference type="PDB" id="3D2O">
    <property type="method" value="X-ray"/>
    <property type="resolution" value="2.04 A"/>
    <property type="chains" value="A/B=1-257"/>
</dbReference>
<dbReference type="PDB" id="5K95">
    <property type="method" value="X-ray"/>
    <property type="resolution" value="2.77 A"/>
    <property type="chains" value="A/B=1-257"/>
</dbReference>
<dbReference type="PDB" id="5K9G">
    <property type="method" value="X-ray"/>
    <property type="resolution" value="1.90 A"/>
    <property type="chains" value="A/B=1-257"/>
</dbReference>
<dbReference type="PDBsum" id="3D2O"/>
<dbReference type="PDBsum" id="5K95"/>
<dbReference type="PDBsum" id="5K9G"/>
<dbReference type="SMR" id="Q5F9K6"/>
<dbReference type="STRING" id="242231.NGO_0387"/>
<dbReference type="KEGG" id="ngo:NGO_0387"/>
<dbReference type="PATRIC" id="fig|242231.10.peg.468"/>
<dbReference type="HOGENOM" id="CLU_062816_1_1_4"/>
<dbReference type="BRENDA" id="3.5.4.16">
    <property type="organism ID" value="3590"/>
</dbReference>
<dbReference type="UniPathway" id="UPA00848">
    <property type="reaction ID" value="UER00151"/>
</dbReference>
<dbReference type="EvolutionaryTrace" id="Q5F9K6"/>
<dbReference type="Proteomes" id="UP000000535">
    <property type="component" value="Chromosome"/>
</dbReference>
<dbReference type="GO" id="GO:0003934">
    <property type="term" value="F:GTP cyclohydrolase I activity"/>
    <property type="evidence" value="ECO:0007669"/>
    <property type="project" value="UniProtKB-UniRule"/>
</dbReference>
<dbReference type="GO" id="GO:0046654">
    <property type="term" value="P:tetrahydrofolate biosynthetic process"/>
    <property type="evidence" value="ECO:0007669"/>
    <property type="project" value="UniProtKB-UniRule"/>
</dbReference>
<dbReference type="Gene3D" id="3.10.270.10">
    <property type="entry name" value="Urate Oxidase"/>
    <property type="match status" value="1"/>
</dbReference>
<dbReference type="HAMAP" id="MF_01527_B">
    <property type="entry name" value="GTP_cyclohydrol_B"/>
    <property type="match status" value="1"/>
</dbReference>
<dbReference type="InterPro" id="IPR022838">
    <property type="entry name" value="GTP_cyclohydrolase_FolE2"/>
</dbReference>
<dbReference type="InterPro" id="IPR003801">
    <property type="entry name" value="GTP_cyclohydrolase_FolE2/MptA"/>
</dbReference>
<dbReference type="NCBIfam" id="NF010200">
    <property type="entry name" value="PRK13674.1-1"/>
    <property type="match status" value="1"/>
</dbReference>
<dbReference type="PANTHER" id="PTHR36445">
    <property type="entry name" value="GTP CYCLOHYDROLASE MPTA"/>
    <property type="match status" value="1"/>
</dbReference>
<dbReference type="PANTHER" id="PTHR36445:SF1">
    <property type="entry name" value="GTP CYCLOHYDROLASE MPTA"/>
    <property type="match status" value="1"/>
</dbReference>
<dbReference type="Pfam" id="PF02649">
    <property type="entry name" value="GCHY-1"/>
    <property type="match status" value="1"/>
</dbReference>
<feature type="chain" id="PRO_0000147714" description="GTP cyclohydrolase FolE2">
    <location>
        <begin position="1"/>
        <end position="257"/>
    </location>
</feature>
<feature type="site" description="May be catalytically important" evidence="1">
    <location>
        <position position="147"/>
    </location>
</feature>
<feature type="strand" evidence="4">
    <location>
        <begin position="18"/>
        <end position="34"/>
    </location>
</feature>
<feature type="strand" evidence="4">
    <location>
        <begin position="37"/>
        <end position="51"/>
    </location>
</feature>
<feature type="helix" evidence="4">
    <location>
        <begin position="61"/>
        <end position="69"/>
    </location>
</feature>
<feature type="helix" evidence="4">
    <location>
        <begin position="76"/>
        <end position="90"/>
    </location>
</feature>
<feature type="strand" evidence="4">
    <location>
        <begin position="93"/>
        <end position="108"/>
    </location>
</feature>
<feature type="turn" evidence="4">
    <location>
        <begin position="110"/>
        <end position="112"/>
    </location>
</feature>
<feature type="strand" evidence="4">
    <location>
        <begin position="115"/>
        <end position="129"/>
    </location>
</feature>
<feature type="strand" evidence="4">
    <location>
        <begin position="132"/>
        <end position="146"/>
    </location>
</feature>
<feature type="helix" evidence="4">
    <location>
        <begin position="148"/>
        <end position="153"/>
    </location>
</feature>
<feature type="strand" evidence="4">
    <location>
        <begin position="154"/>
        <end position="156"/>
    </location>
</feature>
<feature type="strand" evidence="4">
    <location>
        <begin position="160"/>
        <end position="173"/>
    </location>
</feature>
<feature type="helix" evidence="4">
    <location>
        <begin position="177"/>
        <end position="185"/>
    </location>
</feature>
<feature type="strand" evidence="4">
    <location>
        <begin position="188"/>
        <end position="191"/>
    </location>
</feature>
<feature type="helix" evidence="4">
    <location>
        <begin position="198"/>
        <end position="210"/>
    </location>
</feature>
<feature type="helix" evidence="4">
    <location>
        <begin position="215"/>
        <end position="228"/>
    </location>
</feature>
<feature type="strand" evidence="4">
    <location>
        <begin position="232"/>
        <end position="241"/>
    </location>
</feature>
<feature type="strand" evidence="4">
    <location>
        <begin position="246"/>
        <end position="256"/>
    </location>
</feature>
<accession>Q5F9K6</accession>
<sequence>MNAIADVQSSRDLRNLPINQVGIKDLRFPITLKTAEGTQSTVARLTMTVYLPAEQKGTHMSRFVALMEQHTEVLDFAQLHRLTAEMVALLDSRAGKISVSFPFFRKKTAPVSGIRSLLDYDVSLTGEMKDGAYGHSMKVMIPVTSLCPCSKEISQYGAHNQRSHVTVSLTSDAEVGIEEVIDYVETQASCQLYGLLKRPDEKYVTEKAYENPKFVEDMVRDVATSLIADKRIKSFVVESENFESIHNHSAYAYIAYP</sequence>
<proteinExistence type="evidence at protein level"/>
<comment type="function">
    <text evidence="2">Converts GTP to 7,8-dihydroneopterin triphosphate.</text>
</comment>
<comment type="catalytic activity">
    <reaction evidence="2">
        <text>GTP + H2O = 7,8-dihydroneopterin 3'-triphosphate + formate + H(+)</text>
        <dbReference type="Rhea" id="RHEA:17473"/>
        <dbReference type="ChEBI" id="CHEBI:15377"/>
        <dbReference type="ChEBI" id="CHEBI:15378"/>
        <dbReference type="ChEBI" id="CHEBI:15740"/>
        <dbReference type="ChEBI" id="CHEBI:37565"/>
        <dbReference type="ChEBI" id="CHEBI:58462"/>
        <dbReference type="EC" id="3.5.4.16"/>
    </reaction>
</comment>
<comment type="pathway">
    <text>Cofactor biosynthesis; 7,8-dihydroneopterin triphosphate biosynthesis; 7,8-dihydroneopterin triphosphate from GTP: step 1/1.</text>
</comment>
<comment type="similarity">
    <text evidence="3">Belongs to the GTP cyclohydrolase IV family.</text>
</comment>
<protein>
    <recommendedName>
        <fullName>GTP cyclohydrolase FolE2</fullName>
        <ecNumber>3.5.4.16</ecNumber>
    </recommendedName>
    <alternativeName>
        <fullName>GTP cyclohydrolase 1B</fullName>
    </alternativeName>
</protein>
<evidence type="ECO:0000250" key="1"/>
<evidence type="ECO:0000269" key="2">
    <source>
    </source>
</evidence>
<evidence type="ECO:0000305" key="3"/>
<evidence type="ECO:0007829" key="4">
    <source>
        <dbReference type="PDB" id="5K9G"/>
    </source>
</evidence>
<keyword id="KW-0002">3D-structure</keyword>
<keyword id="KW-0378">Hydrolase</keyword>
<keyword id="KW-1185">Reference proteome</keyword>
<gene>
    <name type="primary">folE2</name>
    <name type="ordered locus">NGO_0387</name>
</gene>
<name>GCH4_NEIG1</name>
<reference key="1">
    <citation type="submission" date="2003-03" db="EMBL/GenBank/DDBJ databases">
        <title>The complete genome sequence of Neisseria gonorrhoeae.</title>
        <authorList>
            <person name="Lewis L.A."/>
            <person name="Gillaspy A.F."/>
            <person name="McLaughlin R.E."/>
            <person name="Gipson M."/>
            <person name="Ducey T.F."/>
            <person name="Ownbey T."/>
            <person name="Hartman K."/>
            <person name="Nydick C."/>
            <person name="Carson M.B."/>
            <person name="Vaughn J."/>
            <person name="Thomson C."/>
            <person name="Song L."/>
            <person name="Lin S."/>
            <person name="Yuan X."/>
            <person name="Najar F."/>
            <person name="Zhan M."/>
            <person name="Ren Q."/>
            <person name="Zhu H."/>
            <person name="Qi S."/>
            <person name="Kenton S.M."/>
            <person name="Lai H."/>
            <person name="White J.D."/>
            <person name="Clifton S."/>
            <person name="Roe B.A."/>
            <person name="Dyer D.W."/>
        </authorList>
    </citation>
    <scope>NUCLEOTIDE SEQUENCE [LARGE SCALE GENOMIC DNA]</scope>
    <source>
        <strain>ATCC 700825 / FA 1090</strain>
    </source>
</reference>
<reference key="2">
    <citation type="journal article" date="2006" name="J. Biol. Chem.">
        <title>Discovery of a new prokaryotic type I GTP cyclohydrolase family.</title>
        <authorList>
            <person name="El Yacoubi B."/>
            <person name="Bonnett S."/>
            <person name="Anderson J.N."/>
            <person name="Swairjo M.A."/>
            <person name="Iwata-Reuyl D."/>
            <person name="de Crecy-Lagard V."/>
        </authorList>
    </citation>
    <scope>FUNCTION</scope>
    <scope>CATALYTIC ACTIVITY</scope>
</reference>